<accession>A9A8X7</accession>
<dbReference type="EC" id="5.4.99.25" evidence="1"/>
<dbReference type="EMBL" id="CP000867">
    <property type="protein sequence ID" value="ABX01800.1"/>
    <property type="molecule type" value="Genomic_DNA"/>
</dbReference>
<dbReference type="SMR" id="A9A8X7"/>
<dbReference type="STRING" id="444158.MmarC6_0985"/>
<dbReference type="KEGG" id="mmx:MmarC6_0985"/>
<dbReference type="eggNOG" id="arCOG00987">
    <property type="taxonomic scope" value="Archaea"/>
</dbReference>
<dbReference type="HOGENOM" id="CLU_032087_3_0_2"/>
<dbReference type="OrthoDB" id="35866at2157"/>
<dbReference type="PhylomeDB" id="A9A8X7"/>
<dbReference type="GO" id="GO:0003723">
    <property type="term" value="F:RNA binding"/>
    <property type="evidence" value="ECO:0007669"/>
    <property type="project" value="InterPro"/>
</dbReference>
<dbReference type="GO" id="GO:0160148">
    <property type="term" value="F:tRNA pseudouridine(55) synthase activity"/>
    <property type="evidence" value="ECO:0007669"/>
    <property type="project" value="UniProtKB-EC"/>
</dbReference>
<dbReference type="GO" id="GO:0000495">
    <property type="term" value="P:box H/ACA sno(s)RNA 3'-end processing"/>
    <property type="evidence" value="ECO:0007669"/>
    <property type="project" value="TreeGrafter"/>
</dbReference>
<dbReference type="GO" id="GO:1990481">
    <property type="term" value="P:mRNA pseudouridine synthesis"/>
    <property type="evidence" value="ECO:0007669"/>
    <property type="project" value="TreeGrafter"/>
</dbReference>
<dbReference type="GO" id="GO:0031118">
    <property type="term" value="P:rRNA pseudouridine synthesis"/>
    <property type="evidence" value="ECO:0007669"/>
    <property type="project" value="TreeGrafter"/>
</dbReference>
<dbReference type="GO" id="GO:0031120">
    <property type="term" value="P:snRNA pseudouridine synthesis"/>
    <property type="evidence" value="ECO:0007669"/>
    <property type="project" value="TreeGrafter"/>
</dbReference>
<dbReference type="GO" id="GO:0031119">
    <property type="term" value="P:tRNA pseudouridine synthesis"/>
    <property type="evidence" value="ECO:0007669"/>
    <property type="project" value="UniProtKB-UniRule"/>
</dbReference>
<dbReference type="CDD" id="cd02572">
    <property type="entry name" value="PseudoU_synth_hDyskerin"/>
    <property type="match status" value="1"/>
</dbReference>
<dbReference type="CDD" id="cd21148">
    <property type="entry name" value="PUA_Cbf5"/>
    <property type="match status" value="1"/>
</dbReference>
<dbReference type="FunFam" id="3.30.2350.10:FF:000001">
    <property type="entry name" value="H/ACA ribonucleoprotein complex subunit CBF5"/>
    <property type="match status" value="1"/>
</dbReference>
<dbReference type="Gene3D" id="3.30.2350.10">
    <property type="entry name" value="Pseudouridine synthase"/>
    <property type="match status" value="1"/>
</dbReference>
<dbReference type="Gene3D" id="2.30.130.10">
    <property type="entry name" value="PUA domain"/>
    <property type="match status" value="1"/>
</dbReference>
<dbReference type="HAMAP" id="MF_01081">
    <property type="entry name" value="TruB_arch"/>
    <property type="match status" value="1"/>
</dbReference>
<dbReference type="InterPro" id="IPR012960">
    <property type="entry name" value="Dyskerin-like"/>
</dbReference>
<dbReference type="InterPro" id="IPR020103">
    <property type="entry name" value="PsdUridine_synth_cat_dom_sf"/>
</dbReference>
<dbReference type="InterPro" id="IPR002501">
    <property type="entry name" value="PsdUridine_synth_N"/>
</dbReference>
<dbReference type="InterPro" id="IPR002478">
    <property type="entry name" value="PUA"/>
</dbReference>
<dbReference type="InterPro" id="IPR015947">
    <property type="entry name" value="PUA-like_sf"/>
</dbReference>
<dbReference type="InterPro" id="IPR036974">
    <property type="entry name" value="PUA_sf"/>
</dbReference>
<dbReference type="InterPro" id="IPR004802">
    <property type="entry name" value="tRNA_PsdUridine_synth_B_fam"/>
</dbReference>
<dbReference type="InterPro" id="IPR026326">
    <property type="entry name" value="TruB_arch"/>
</dbReference>
<dbReference type="InterPro" id="IPR032819">
    <property type="entry name" value="TruB_C"/>
</dbReference>
<dbReference type="InterPro" id="IPR004521">
    <property type="entry name" value="Uncharacterised_CHP00451"/>
</dbReference>
<dbReference type="NCBIfam" id="TIGR00425">
    <property type="entry name" value="CBF5"/>
    <property type="match status" value="1"/>
</dbReference>
<dbReference type="NCBIfam" id="NF003280">
    <property type="entry name" value="PRK04270.1"/>
    <property type="match status" value="1"/>
</dbReference>
<dbReference type="NCBIfam" id="TIGR00451">
    <property type="entry name" value="unchar_dom_2"/>
    <property type="match status" value="1"/>
</dbReference>
<dbReference type="PANTHER" id="PTHR23127">
    <property type="entry name" value="CENTROMERE/MICROTUBULE BINDING PROTEIN CBF5"/>
    <property type="match status" value="1"/>
</dbReference>
<dbReference type="PANTHER" id="PTHR23127:SF0">
    <property type="entry name" value="H_ACA RIBONUCLEOPROTEIN COMPLEX SUBUNIT DKC1"/>
    <property type="match status" value="1"/>
</dbReference>
<dbReference type="Pfam" id="PF08068">
    <property type="entry name" value="DKCLD"/>
    <property type="match status" value="1"/>
</dbReference>
<dbReference type="Pfam" id="PF01472">
    <property type="entry name" value="PUA"/>
    <property type="match status" value="1"/>
</dbReference>
<dbReference type="Pfam" id="PF16198">
    <property type="entry name" value="TruB_C_2"/>
    <property type="match status" value="1"/>
</dbReference>
<dbReference type="Pfam" id="PF01509">
    <property type="entry name" value="TruB_N"/>
    <property type="match status" value="1"/>
</dbReference>
<dbReference type="SMART" id="SM01136">
    <property type="entry name" value="DKCLD"/>
    <property type="match status" value="1"/>
</dbReference>
<dbReference type="SMART" id="SM00359">
    <property type="entry name" value="PUA"/>
    <property type="match status" value="1"/>
</dbReference>
<dbReference type="SUPFAM" id="SSF55120">
    <property type="entry name" value="Pseudouridine synthase"/>
    <property type="match status" value="1"/>
</dbReference>
<dbReference type="SUPFAM" id="SSF88697">
    <property type="entry name" value="PUA domain-like"/>
    <property type="match status" value="1"/>
</dbReference>
<dbReference type="PROSITE" id="PS50890">
    <property type="entry name" value="PUA"/>
    <property type="match status" value="1"/>
</dbReference>
<protein>
    <recommendedName>
        <fullName evidence="1">Probable tRNA pseudouridine synthase B</fullName>
        <ecNumber evidence="1">5.4.99.25</ecNumber>
    </recommendedName>
    <alternativeName>
        <fullName evidence="1">tRNA pseudouridine(55) synthase</fullName>
        <shortName evidence="1">Psi55 synthase</shortName>
    </alternativeName>
    <alternativeName>
        <fullName evidence="1">tRNA pseudouridylate synthase</fullName>
    </alternativeName>
    <alternativeName>
        <fullName evidence="1">tRNA-uridine isomerase</fullName>
    </alternativeName>
</protein>
<name>TRUB_METM6</name>
<keyword id="KW-0413">Isomerase</keyword>
<keyword id="KW-0819">tRNA processing</keyword>
<sequence>MELIVKEESKTDYNYGSDPYKRDIKTLLNTGLVVIDKPSGPTSHEVAAWVRNMLNLVKAGHGGTLDPKVTGALPVALGNTTKCVPIWHIPPKEYVCLMHLHDDAKLEDIENIFKEFTGRIHQRPPLKAAVKRSLRIRKIYEIEILEIDGRDILFRTKCQSGTYLRKLVDDMGEALGTSAHMQELRRTISGPFYENEAVYLQDLLDAYISWKEDGNEEELRKLVKPLEYGLQHLKKIIVKDSAVDAVCHGATLYSSGVSKIEKGIGTDEVVLIETLKGEAVAVGKPLMNTKDMLKTEEGEVVEITRVIMEPGIYPRIWKKRNKNDKSKPESKKN</sequence>
<organism>
    <name type="scientific">Methanococcus maripaludis (strain C6 / ATCC BAA-1332)</name>
    <dbReference type="NCBI Taxonomy" id="444158"/>
    <lineage>
        <taxon>Archaea</taxon>
        <taxon>Methanobacteriati</taxon>
        <taxon>Methanobacteriota</taxon>
        <taxon>Methanomada group</taxon>
        <taxon>Methanococci</taxon>
        <taxon>Methanococcales</taxon>
        <taxon>Methanococcaceae</taxon>
        <taxon>Methanococcus</taxon>
    </lineage>
</organism>
<reference key="1">
    <citation type="submission" date="2007-10" db="EMBL/GenBank/DDBJ databases">
        <title>Complete sequence of Methanococcus maripaludis C6.</title>
        <authorList>
            <consortium name="US DOE Joint Genome Institute"/>
            <person name="Copeland A."/>
            <person name="Lucas S."/>
            <person name="Lapidus A."/>
            <person name="Barry K."/>
            <person name="Glavina del Rio T."/>
            <person name="Dalin E."/>
            <person name="Tice H."/>
            <person name="Pitluck S."/>
            <person name="Clum A."/>
            <person name="Schmutz J."/>
            <person name="Larimer F."/>
            <person name="Land M."/>
            <person name="Hauser L."/>
            <person name="Kyrpides N."/>
            <person name="Mikhailova N."/>
            <person name="Sieprawska-Lupa M."/>
            <person name="Whitman W.B."/>
            <person name="Richardson P."/>
        </authorList>
    </citation>
    <scope>NUCLEOTIDE SEQUENCE [LARGE SCALE GENOMIC DNA]</scope>
    <source>
        <strain>C6 / ATCC BAA-1332</strain>
    </source>
</reference>
<gene>
    <name evidence="1" type="primary">truB</name>
    <name type="ordered locus">MmarC6_0985</name>
</gene>
<feature type="chain" id="PRO_1000136824" description="Probable tRNA pseudouridine synthase B">
    <location>
        <begin position="1"/>
        <end position="333"/>
    </location>
</feature>
<feature type="domain" description="PUA" evidence="1">
    <location>
        <begin position="233"/>
        <end position="308"/>
    </location>
</feature>
<feature type="active site" description="Nucleophile" evidence="1">
    <location>
        <position position="66"/>
    </location>
</feature>
<proteinExistence type="inferred from homology"/>
<evidence type="ECO:0000255" key="1">
    <source>
        <dbReference type="HAMAP-Rule" id="MF_01081"/>
    </source>
</evidence>
<comment type="function">
    <text evidence="1">Could be responsible for synthesis of pseudouridine from uracil-55 in the psi GC loop of transfer RNAs.</text>
</comment>
<comment type="catalytic activity">
    <reaction evidence="1">
        <text>uridine(55) in tRNA = pseudouridine(55) in tRNA</text>
        <dbReference type="Rhea" id="RHEA:42532"/>
        <dbReference type="Rhea" id="RHEA-COMP:10101"/>
        <dbReference type="Rhea" id="RHEA-COMP:10102"/>
        <dbReference type="ChEBI" id="CHEBI:65314"/>
        <dbReference type="ChEBI" id="CHEBI:65315"/>
        <dbReference type="EC" id="5.4.99.25"/>
    </reaction>
</comment>
<comment type="similarity">
    <text evidence="1">Belongs to the pseudouridine synthase TruB family. Type 2 subfamily.</text>
</comment>